<sequence>MTENIRQIAFYGKGGIGKSTTSQNTLAAMAEMGQRIMIVGCDPKADSTRLMLHSKAQTTVLHLAAERGAVEDLELEEVMLTGFRGVKCVESGGPEPGVGCAGRGIITAINFLEENGAYQDLDFVSYDVLGDVVCGGFAMPIREGKAQEIYIVTSGEMMAMYAANNIARGILKYAHSGGVRLGGLICNSRKVDREAELIENLAERLNTQMIHFVPRDNIVQHAELRRMTVNEYAPDSNQSQEYRALAKKIINNTKLTIPTPMEMDELEALLIEYGILDDDTKHADIIGKPAEASAK</sequence>
<organism>
    <name type="scientific">Mastigocladus laminosus</name>
    <name type="common">Fischerella sp.</name>
    <dbReference type="NCBI Taxonomy" id="83541"/>
    <lineage>
        <taxon>Bacteria</taxon>
        <taxon>Bacillati</taxon>
        <taxon>Cyanobacteriota</taxon>
        <taxon>Cyanophyceae</taxon>
        <taxon>Nostocales</taxon>
        <taxon>Hapalosiphonaceae</taxon>
        <taxon>Mastigocladus</taxon>
    </lineage>
</organism>
<dbReference type="EC" id="1.18.6.1"/>
<dbReference type="EMBL" id="U49514">
    <property type="protein sequence ID" value="AAC64642.1"/>
    <property type="molecule type" value="Genomic_DNA"/>
</dbReference>
<dbReference type="EMBL" id="U73140">
    <property type="protein sequence ID" value="AAC64640.1"/>
    <property type="molecule type" value="Genomic_DNA"/>
</dbReference>
<dbReference type="SMR" id="Q47917"/>
<dbReference type="GO" id="GO:0051539">
    <property type="term" value="F:4 iron, 4 sulfur cluster binding"/>
    <property type="evidence" value="ECO:0007669"/>
    <property type="project" value="UniProtKB-KW"/>
</dbReference>
<dbReference type="GO" id="GO:0005524">
    <property type="term" value="F:ATP binding"/>
    <property type="evidence" value="ECO:0007669"/>
    <property type="project" value="UniProtKB-UniRule"/>
</dbReference>
<dbReference type="GO" id="GO:0046872">
    <property type="term" value="F:metal ion binding"/>
    <property type="evidence" value="ECO:0007669"/>
    <property type="project" value="UniProtKB-KW"/>
</dbReference>
<dbReference type="GO" id="GO:0016163">
    <property type="term" value="F:nitrogenase activity"/>
    <property type="evidence" value="ECO:0007669"/>
    <property type="project" value="UniProtKB-UniRule"/>
</dbReference>
<dbReference type="GO" id="GO:0009399">
    <property type="term" value="P:nitrogen fixation"/>
    <property type="evidence" value="ECO:0007669"/>
    <property type="project" value="UniProtKB-UniRule"/>
</dbReference>
<dbReference type="CDD" id="cd02040">
    <property type="entry name" value="NifH"/>
    <property type="match status" value="1"/>
</dbReference>
<dbReference type="FunFam" id="3.40.50.300:FF:001379">
    <property type="entry name" value="Nitrogenase iron protein 1"/>
    <property type="match status" value="1"/>
</dbReference>
<dbReference type="Gene3D" id="3.40.50.300">
    <property type="entry name" value="P-loop containing nucleotide triphosphate hydrolases"/>
    <property type="match status" value="1"/>
</dbReference>
<dbReference type="HAMAP" id="MF_00533">
    <property type="entry name" value="NifH"/>
    <property type="match status" value="1"/>
</dbReference>
<dbReference type="InterPro" id="IPR030655">
    <property type="entry name" value="NifH/chlL_CS"/>
</dbReference>
<dbReference type="InterPro" id="IPR000392">
    <property type="entry name" value="NifH/frxC"/>
</dbReference>
<dbReference type="InterPro" id="IPR005977">
    <property type="entry name" value="Nitrogenase_Fe_NifH"/>
</dbReference>
<dbReference type="InterPro" id="IPR027417">
    <property type="entry name" value="P-loop_NTPase"/>
</dbReference>
<dbReference type="NCBIfam" id="TIGR01287">
    <property type="entry name" value="nifH"/>
    <property type="match status" value="1"/>
</dbReference>
<dbReference type="PANTHER" id="PTHR42864">
    <property type="entry name" value="LIGHT-INDEPENDENT PROTOCHLOROPHYLLIDE REDUCTASE IRON-SULFUR ATP-BINDING PROTEIN"/>
    <property type="match status" value="1"/>
</dbReference>
<dbReference type="PANTHER" id="PTHR42864:SF2">
    <property type="entry name" value="LIGHT-INDEPENDENT PROTOCHLOROPHYLLIDE REDUCTASE IRON-SULFUR ATP-BINDING PROTEIN"/>
    <property type="match status" value="1"/>
</dbReference>
<dbReference type="Pfam" id="PF00142">
    <property type="entry name" value="Fer4_NifH"/>
    <property type="match status" value="1"/>
</dbReference>
<dbReference type="PIRSF" id="PIRSF000363">
    <property type="entry name" value="Nitrogenase_iron"/>
    <property type="match status" value="1"/>
</dbReference>
<dbReference type="PRINTS" id="PR00091">
    <property type="entry name" value="NITROGNASEII"/>
</dbReference>
<dbReference type="SUPFAM" id="SSF52540">
    <property type="entry name" value="P-loop containing nucleoside triphosphate hydrolases"/>
    <property type="match status" value="1"/>
</dbReference>
<dbReference type="PROSITE" id="PS00746">
    <property type="entry name" value="NIFH_FRXC_1"/>
    <property type="match status" value="1"/>
</dbReference>
<dbReference type="PROSITE" id="PS00692">
    <property type="entry name" value="NIFH_FRXC_2"/>
    <property type="match status" value="1"/>
</dbReference>
<dbReference type="PROSITE" id="PS51026">
    <property type="entry name" value="NIFH_FRXC_3"/>
    <property type="match status" value="1"/>
</dbReference>
<comment type="function">
    <text evidence="1">The key enzymatic reactions in nitrogen fixation are catalyzed by the nitrogenase complex, which has 2 components: the iron protein and the molybdenum-iron protein.</text>
</comment>
<comment type="catalytic activity">
    <reaction>
        <text>N2 + 8 reduced [2Fe-2S]-[ferredoxin] + 16 ATP + 16 H2O = H2 + 8 oxidized [2Fe-2S]-[ferredoxin] + 2 NH4(+) + 16 ADP + 16 phosphate + 6 H(+)</text>
        <dbReference type="Rhea" id="RHEA:21448"/>
        <dbReference type="Rhea" id="RHEA-COMP:10000"/>
        <dbReference type="Rhea" id="RHEA-COMP:10001"/>
        <dbReference type="ChEBI" id="CHEBI:15377"/>
        <dbReference type="ChEBI" id="CHEBI:15378"/>
        <dbReference type="ChEBI" id="CHEBI:17997"/>
        <dbReference type="ChEBI" id="CHEBI:18276"/>
        <dbReference type="ChEBI" id="CHEBI:28938"/>
        <dbReference type="ChEBI" id="CHEBI:30616"/>
        <dbReference type="ChEBI" id="CHEBI:33737"/>
        <dbReference type="ChEBI" id="CHEBI:33738"/>
        <dbReference type="ChEBI" id="CHEBI:43474"/>
        <dbReference type="ChEBI" id="CHEBI:456216"/>
        <dbReference type="EC" id="1.18.6.1"/>
    </reaction>
</comment>
<comment type="cofactor">
    <cofactor evidence="1">
        <name>[4Fe-4S] cluster</name>
        <dbReference type="ChEBI" id="CHEBI:49883"/>
    </cofactor>
    <text evidence="1">Binds 1 [4Fe-4S] cluster per dimer.</text>
</comment>
<comment type="subunit">
    <text evidence="1">Homodimer.</text>
</comment>
<comment type="PTM">
    <text evidence="1">The reversible ADP-ribosylation of Arg-103 inactivates the nitrogenase reductase and regulates nitrogenase activity.</text>
</comment>
<comment type="similarity">
    <text evidence="3">Belongs to the NifH/BchL/ChlL family.</text>
</comment>
<gene>
    <name type="primary">nifH1</name>
    <name type="synonym">nifH</name>
</gene>
<evidence type="ECO:0000250" key="1"/>
<evidence type="ECO:0000255" key="2"/>
<evidence type="ECO:0000305" key="3"/>
<accession>Q47917</accession>
<reference key="1">
    <citation type="submission" date="1996-02" db="EMBL/GenBank/DDBJ databases">
        <title>Nucleotide sequences of the nifHDK, orf4, and nifH2 genes and of putative regulatory sequences from the thermophilic cyanobacterium Fischerella sp.</title>
        <authorList>
            <person name="Luo X.-Z.J."/>
            <person name="Stevens S.E."/>
        </authorList>
    </citation>
    <scope>NUCLEOTIDE SEQUENCE [GENOMIC DNA]</scope>
    <source>
        <strain>UTEX 1931</strain>
    </source>
</reference>
<reference key="2">
    <citation type="journal article" date="1997" name="Microbiology">
        <title>Phylogeny of cyanobacterial nifH genes: evolutionary implications and potential applications to natural assemblages.</title>
        <authorList>
            <person name="Zehr J.P."/>
            <person name="Mellon M.T."/>
            <person name="Hiorns W.D."/>
        </authorList>
    </citation>
    <scope>NUCLEOTIDE SEQUENCE [GENOMIC DNA] OF 47-154</scope>
    <source>
        <strain>UTEX 1903</strain>
    </source>
</reference>
<protein>
    <recommendedName>
        <fullName>Nitrogenase iron protein 1</fullName>
        <ecNumber>1.18.6.1</ecNumber>
    </recommendedName>
    <alternativeName>
        <fullName>Nitrogenase Fe protein 1</fullName>
    </alternativeName>
    <alternativeName>
        <fullName>Nitrogenase component II</fullName>
    </alternativeName>
    <alternativeName>
        <fullName>Nitrogenase reductase</fullName>
    </alternativeName>
</protein>
<proteinExistence type="inferred from homology"/>
<name>NIFH1_MASLA</name>
<keyword id="KW-0004">4Fe-4S</keyword>
<keyword id="KW-0013">ADP-ribosylation</keyword>
<keyword id="KW-0067">ATP-binding</keyword>
<keyword id="KW-0408">Iron</keyword>
<keyword id="KW-0411">Iron-sulfur</keyword>
<keyword id="KW-0479">Metal-binding</keyword>
<keyword id="KW-0535">Nitrogen fixation</keyword>
<keyword id="KW-0547">Nucleotide-binding</keyword>
<keyword id="KW-0560">Oxidoreductase</keyword>
<feature type="chain" id="PRO_0000139512" description="Nitrogenase iron protein 1">
    <location>
        <begin position="1"/>
        <end position="295"/>
    </location>
</feature>
<feature type="binding site" evidence="2">
    <location>
        <begin position="12"/>
        <end position="19"/>
    </location>
    <ligand>
        <name>ATP</name>
        <dbReference type="ChEBI" id="CHEBI:30616"/>
    </ligand>
</feature>
<feature type="binding site" evidence="1">
    <location>
        <position position="100"/>
    </location>
    <ligand>
        <name>[4Fe-4S] cluster</name>
        <dbReference type="ChEBI" id="CHEBI:49883"/>
        <note>ligand shared between dimeric partners</note>
    </ligand>
</feature>
<feature type="binding site" evidence="1">
    <location>
        <position position="134"/>
    </location>
    <ligand>
        <name>[4Fe-4S] cluster</name>
        <dbReference type="ChEBI" id="CHEBI:49883"/>
        <note>ligand shared between dimeric partners</note>
    </ligand>
</feature>
<feature type="modified residue" description="ADP-ribosylarginine; by dinitrogenase reductase ADP-ribosyltransferase" evidence="1">
    <location>
        <position position="103"/>
    </location>
</feature>